<sequence length="140" mass="16088">MSRKWLNKVKWDDHGLVPVIVQEQGSNDVLMFAFMNREALQKTVETGEAVFWSRSRKRLWHKGEESGHIQQVHEIRLDCDEDVVLLRVTQVGGIACHTGRHACFFQKFEGTAEDGDWHTVEPVLKNPDDIYAGKPGHNHE</sequence>
<dbReference type="EC" id="3.5.4.19" evidence="1"/>
<dbReference type="EMBL" id="AL646052">
    <property type="protein sequence ID" value="CAD16652.1"/>
    <property type="molecule type" value="Genomic_DNA"/>
</dbReference>
<dbReference type="RefSeq" id="WP_011002850.1">
    <property type="nucleotide sequence ID" value="NC_003295.1"/>
</dbReference>
<dbReference type="SMR" id="Q8XV86"/>
<dbReference type="STRING" id="267608.RSc2945"/>
<dbReference type="EnsemblBacteria" id="CAD16652">
    <property type="protein sequence ID" value="CAD16652"/>
    <property type="gene ID" value="RSc2945"/>
</dbReference>
<dbReference type="KEGG" id="rso:RSc2945"/>
<dbReference type="eggNOG" id="COG0139">
    <property type="taxonomic scope" value="Bacteria"/>
</dbReference>
<dbReference type="HOGENOM" id="CLU_048577_5_0_4"/>
<dbReference type="UniPathway" id="UPA00031">
    <property type="reaction ID" value="UER00008"/>
</dbReference>
<dbReference type="Proteomes" id="UP000001436">
    <property type="component" value="Chromosome"/>
</dbReference>
<dbReference type="GO" id="GO:0005737">
    <property type="term" value="C:cytoplasm"/>
    <property type="evidence" value="ECO:0007669"/>
    <property type="project" value="UniProtKB-SubCell"/>
</dbReference>
<dbReference type="GO" id="GO:0000287">
    <property type="term" value="F:magnesium ion binding"/>
    <property type="evidence" value="ECO:0007669"/>
    <property type="project" value="UniProtKB-UniRule"/>
</dbReference>
<dbReference type="GO" id="GO:0004635">
    <property type="term" value="F:phosphoribosyl-AMP cyclohydrolase activity"/>
    <property type="evidence" value="ECO:0007669"/>
    <property type="project" value="UniProtKB-UniRule"/>
</dbReference>
<dbReference type="GO" id="GO:0008270">
    <property type="term" value="F:zinc ion binding"/>
    <property type="evidence" value="ECO:0007669"/>
    <property type="project" value="UniProtKB-UniRule"/>
</dbReference>
<dbReference type="GO" id="GO:0000105">
    <property type="term" value="P:L-histidine biosynthetic process"/>
    <property type="evidence" value="ECO:0007669"/>
    <property type="project" value="UniProtKB-UniRule"/>
</dbReference>
<dbReference type="FunFam" id="3.10.20.810:FF:000001">
    <property type="entry name" value="Histidine biosynthesis bifunctional protein HisIE"/>
    <property type="match status" value="1"/>
</dbReference>
<dbReference type="Gene3D" id="3.10.20.810">
    <property type="entry name" value="Phosphoribosyl-AMP cyclohydrolase"/>
    <property type="match status" value="1"/>
</dbReference>
<dbReference type="HAMAP" id="MF_01021">
    <property type="entry name" value="HisI"/>
    <property type="match status" value="1"/>
</dbReference>
<dbReference type="InterPro" id="IPR026660">
    <property type="entry name" value="PRA-CH"/>
</dbReference>
<dbReference type="InterPro" id="IPR002496">
    <property type="entry name" value="PRib_AMP_CycHydrolase_dom"/>
</dbReference>
<dbReference type="InterPro" id="IPR038019">
    <property type="entry name" value="PRib_AMP_CycHydrolase_sf"/>
</dbReference>
<dbReference type="NCBIfam" id="NF000768">
    <property type="entry name" value="PRK00051.1"/>
    <property type="match status" value="1"/>
</dbReference>
<dbReference type="PANTHER" id="PTHR42945">
    <property type="entry name" value="HISTIDINE BIOSYNTHESIS BIFUNCTIONAL PROTEIN"/>
    <property type="match status" value="1"/>
</dbReference>
<dbReference type="PANTHER" id="PTHR42945:SF1">
    <property type="entry name" value="HISTIDINE BIOSYNTHESIS BIFUNCTIONAL PROTEIN HIS7"/>
    <property type="match status" value="1"/>
</dbReference>
<dbReference type="Pfam" id="PF01502">
    <property type="entry name" value="PRA-CH"/>
    <property type="match status" value="1"/>
</dbReference>
<dbReference type="SUPFAM" id="SSF141734">
    <property type="entry name" value="HisI-like"/>
    <property type="match status" value="1"/>
</dbReference>
<name>HIS3_RALN1</name>
<reference key="1">
    <citation type="journal article" date="2002" name="Nature">
        <title>Genome sequence of the plant pathogen Ralstonia solanacearum.</title>
        <authorList>
            <person name="Salanoubat M."/>
            <person name="Genin S."/>
            <person name="Artiguenave F."/>
            <person name="Gouzy J."/>
            <person name="Mangenot S."/>
            <person name="Arlat M."/>
            <person name="Billault A."/>
            <person name="Brottier P."/>
            <person name="Camus J.-C."/>
            <person name="Cattolico L."/>
            <person name="Chandler M."/>
            <person name="Choisne N."/>
            <person name="Claudel-Renard C."/>
            <person name="Cunnac S."/>
            <person name="Demange N."/>
            <person name="Gaspin C."/>
            <person name="Lavie M."/>
            <person name="Moisan A."/>
            <person name="Robert C."/>
            <person name="Saurin W."/>
            <person name="Schiex T."/>
            <person name="Siguier P."/>
            <person name="Thebault P."/>
            <person name="Whalen M."/>
            <person name="Wincker P."/>
            <person name="Levy M."/>
            <person name="Weissenbach J."/>
            <person name="Boucher C.A."/>
        </authorList>
    </citation>
    <scope>NUCLEOTIDE SEQUENCE [LARGE SCALE GENOMIC DNA]</scope>
    <source>
        <strain>ATCC BAA-1114 / GMI1000</strain>
    </source>
</reference>
<accession>Q8XV86</accession>
<evidence type="ECO:0000255" key="1">
    <source>
        <dbReference type="HAMAP-Rule" id="MF_01021"/>
    </source>
</evidence>
<feature type="chain" id="PRO_0000136494" description="Phosphoribosyl-AMP cyclohydrolase">
    <location>
        <begin position="1"/>
        <end position="140"/>
    </location>
</feature>
<feature type="binding site" evidence="1">
    <location>
        <position position="78"/>
    </location>
    <ligand>
        <name>Mg(2+)</name>
        <dbReference type="ChEBI" id="CHEBI:18420"/>
    </ligand>
</feature>
<feature type="binding site" evidence="1">
    <location>
        <position position="79"/>
    </location>
    <ligand>
        <name>Zn(2+)</name>
        <dbReference type="ChEBI" id="CHEBI:29105"/>
        <note>ligand shared between dimeric partners</note>
    </ligand>
</feature>
<feature type="binding site" evidence="1">
    <location>
        <position position="80"/>
    </location>
    <ligand>
        <name>Mg(2+)</name>
        <dbReference type="ChEBI" id="CHEBI:18420"/>
    </ligand>
</feature>
<feature type="binding site" evidence="1">
    <location>
        <position position="82"/>
    </location>
    <ligand>
        <name>Mg(2+)</name>
        <dbReference type="ChEBI" id="CHEBI:18420"/>
    </ligand>
</feature>
<feature type="binding site" evidence="1">
    <location>
        <position position="96"/>
    </location>
    <ligand>
        <name>Zn(2+)</name>
        <dbReference type="ChEBI" id="CHEBI:29105"/>
        <note>ligand shared between dimeric partners</note>
    </ligand>
</feature>
<feature type="binding site" evidence="1">
    <location>
        <position position="103"/>
    </location>
    <ligand>
        <name>Zn(2+)</name>
        <dbReference type="ChEBI" id="CHEBI:29105"/>
        <note>ligand shared between dimeric partners</note>
    </ligand>
</feature>
<gene>
    <name evidence="1" type="primary">hisI</name>
    <name type="ordered locus">RSc2945</name>
    <name type="ORF">RS00142</name>
</gene>
<organism>
    <name type="scientific">Ralstonia nicotianae (strain ATCC BAA-1114 / GMI1000)</name>
    <name type="common">Ralstonia solanacearum</name>
    <dbReference type="NCBI Taxonomy" id="267608"/>
    <lineage>
        <taxon>Bacteria</taxon>
        <taxon>Pseudomonadati</taxon>
        <taxon>Pseudomonadota</taxon>
        <taxon>Betaproteobacteria</taxon>
        <taxon>Burkholderiales</taxon>
        <taxon>Burkholderiaceae</taxon>
        <taxon>Ralstonia</taxon>
        <taxon>Ralstonia solanacearum species complex</taxon>
    </lineage>
</organism>
<comment type="function">
    <text evidence="1">Catalyzes the hydrolysis of the adenine ring of phosphoribosyl-AMP.</text>
</comment>
<comment type="catalytic activity">
    <reaction evidence="1">
        <text>1-(5-phospho-beta-D-ribosyl)-5'-AMP + H2O = 1-(5-phospho-beta-D-ribosyl)-5-[(5-phospho-beta-D-ribosylamino)methylideneamino]imidazole-4-carboxamide</text>
        <dbReference type="Rhea" id="RHEA:20049"/>
        <dbReference type="ChEBI" id="CHEBI:15377"/>
        <dbReference type="ChEBI" id="CHEBI:58435"/>
        <dbReference type="ChEBI" id="CHEBI:59457"/>
        <dbReference type="EC" id="3.5.4.19"/>
    </reaction>
</comment>
<comment type="cofactor">
    <cofactor evidence="1">
        <name>Mg(2+)</name>
        <dbReference type="ChEBI" id="CHEBI:18420"/>
    </cofactor>
    <text evidence="1">Binds 1 Mg(2+) ion per subunit.</text>
</comment>
<comment type="cofactor">
    <cofactor evidence="1">
        <name>Zn(2+)</name>
        <dbReference type="ChEBI" id="CHEBI:29105"/>
    </cofactor>
    <text evidence="1">Binds 1 zinc ion per subunit.</text>
</comment>
<comment type="pathway">
    <text evidence="1">Amino-acid biosynthesis; L-histidine biosynthesis; L-histidine from 5-phospho-alpha-D-ribose 1-diphosphate: step 3/9.</text>
</comment>
<comment type="subunit">
    <text evidence="1">Homodimer.</text>
</comment>
<comment type="subcellular location">
    <subcellularLocation>
        <location evidence="1">Cytoplasm</location>
    </subcellularLocation>
</comment>
<comment type="similarity">
    <text evidence="1">Belongs to the PRA-CH family.</text>
</comment>
<proteinExistence type="inferred from homology"/>
<keyword id="KW-0028">Amino-acid biosynthesis</keyword>
<keyword id="KW-0963">Cytoplasm</keyword>
<keyword id="KW-0368">Histidine biosynthesis</keyword>
<keyword id="KW-0378">Hydrolase</keyword>
<keyword id="KW-0460">Magnesium</keyword>
<keyword id="KW-0479">Metal-binding</keyword>
<keyword id="KW-1185">Reference proteome</keyword>
<keyword id="KW-0862">Zinc</keyword>
<protein>
    <recommendedName>
        <fullName evidence="1">Phosphoribosyl-AMP cyclohydrolase</fullName>
        <shortName evidence="1">PRA-CH</shortName>
        <ecNumber evidence="1">3.5.4.19</ecNumber>
    </recommendedName>
</protein>